<proteinExistence type="evidence at protein level"/>
<name>MYLK_MELGA</name>
<feature type="chain" id="PRO_0000086407" description="Telokin">
    <location>
        <begin position="1"/>
        <end position="154"/>
    </location>
</feature>
<feature type="domain" description="Ig-like C2-type">
    <location>
        <begin position="42"/>
        <end position="133"/>
    </location>
</feature>
<feature type="region of interest" description="Disordered" evidence="2">
    <location>
        <begin position="1"/>
        <end position="24"/>
    </location>
</feature>
<feature type="region of interest" description="Disordered" evidence="2">
    <location>
        <begin position="134"/>
        <end position="154"/>
    </location>
</feature>
<feature type="compositionally biased region" description="Polar residues" evidence="2">
    <location>
        <begin position="10"/>
        <end position="19"/>
    </location>
</feature>
<feature type="compositionally biased region" description="Acidic residues" evidence="2">
    <location>
        <begin position="141"/>
        <end position="154"/>
    </location>
</feature>
<feature type="strand" evidence="4">
    <location>
        <begin position="40"/>
        <end position="46"/>
    </location>
</feature>
<feature type="strand" evidence="4">
    <location>
        <begin position="51"/>
        <end position="54"/>
    </location>
</feature>
<feature type="strand" evidence="4">
    <location>
        <begin position="59"/>
        <end position="69"/>
    </location>
</feature>
<feature type="strand" evidence="4">
    <location>
        <begin position="72"/>
        <end position="77"/>
    </location>
</feature>
<feature type="strand" evidence="4">
    <location>
        <begin position="85"/>
        <end position="92"/>
    </location>
</feature>
<feature type="strand" evidence="4">
    <location>
        <begin position="97"/>
        <end position="104"/>
    </location>
</feature>
<feature type="helix" evidence="4">
    <location>
        <begin position="107"/>
        <end position="109"/>
    </location>
</feature>
<feature type="strand" evidence="4">
    <location>
        <begin position="111"/>
        <end position="119"/>
    </location>
</feature>
<feature type="strand" evidence="4">
    <location>
        <begin position="122"/>
        <end position="133"/>
    </location>
</feature>
<keyword id="KW-0002">3D-structure</keyword>
<keyword id="KW-0112">Calmodulin-binding</keyword>
<keyword id="KW-0393">Immunoglobulin domain</keyword>
<keyword id="KW-1185">Reference proteome</keyword>
<evidence type="ECO:0000250" key="1"/>
<evidence type="ECO:0000256" key="2">
    <source>
        <dbReference type="SAM" id="MobiDB-lite"/>
    </source>
</evidence>
<evidence type="ECO:0000305" key="3"/>
<evidence type="ECO:0007829" key="4">
    <source>
        <dbReference type="PDB" id="1FHG"/>
    </source>
</evidence>
<accession>P56276</accession>
<sequence>ISGMSGRKASGSSPTSPINANKVENEDAFLEEVAEEKPHVKPYFTKTILDMDVVEGSAARFDCKVEGYPDPEVMWFKDDNPVKESRHFQIDYDEEGNCSLTISEVCGDDDAKYTCKAVNSLGEATCTAELLVETMGKEGEGEGEGEEDEEEEEE</sequence>
<reference key="1">
    <citation type="journal article" date="1992" name="J. Mol. Biol.">
        <title>X-ray structure determination of telokin, the C-terminal domain of myosin light chain kinase, at 2.8-A resolution.</title>
        <authorList>
            <person name="Holden H.M."/>
            <person name="Ito M."/>
            <person name="Hartshorne D.J."/>
            <person name="Rayment I."/>
        </authorList>
    </citation>
    <scope>X-RAY CRYSTALLOGRAPHY (2.8 ANGSTROMS)</scope>
    <source>
        <tissue>Gizzard</tissue>
    </source>
</reference>
<organism>
    <name type="scientific">Meleagris gallopavo</name>
    <name type="common">Wild turkey</name>
    <dbReference type="NCBI Taxonomy" id="9103"/>
    <lineage>
        <taxon>Eukaryota</taxon>
        <taxon>Metazoa</taxon>
        <taxon>Chordata</taxon>
        <taxon>Craniata</taxon>
        <taxon>Vertebrata</taxon>
        <taxon>Euteleostomi</taxon>
        <taxon>Archelosauria</taxon>
        <taxon>Archosauria</taxon>
        <taxon>Dinosauria</taxon>
        <taxon>Saurischia</taxon>
        <taxon>Theropoda</taxon>
        <taxon>Coelurosauria</taxon>
        <taxon>Aves</taxon>
        <taxon>Neognathae</taxon>
        <taxon>Galloanserae</taxon>
        <taxon>Galliformes</taxon>
        <taxon>Phasianidae</taxon>
        <taxon>Meleagridinae</taxon>
        <taxon>Meleagris</taxon>
    </lineage>
</organism>
<protein>
    <recommendedName>
        <fullName>Telokin</fullName>
    </recommendedName>
</protein>
<comment type="function">
    <text>Corresponds to the C-terminus of smooth muscle myosin light chain kinase.</text>
</comment>
<comment type="subunit">
    <text evidence="1">Binds calmodulin.</text>
</comment>
<comment type="similarity">
    <text evidence="3">Belongs to the protein kinase superfamily. CAMK Ser/Thr protein kinase family.</text>
</comment>
<dbReference type="PDB" id="1FHG">
    <property type="method" value="X-ray"/>
    <property type="resolution" value="2.00 A"/>
    <property type="chains" value="A=1-154"/>
</dbReference>
<dbReference type="PDB" id="1TLK">
    <property type="method" value="X-ray"/>
    <property type="resolution" value="2.80 A"/>
    <property type="chains" value="A=1-154"/>
</dbReference>
<dbReference type="PDBsum" id="1FHG"/>
<dbReference type="PDBsum" id="1TLK"/>
<dbReference type="SMR" id="P56276"/>
<dbReference type="InParanoid" id="P56276"/>
<dbReference type="EvolutionaryTrace" id="P56276"/>
<dbReference type="Proteomes" id="UP000001645">
    <property type="component" value="Unplaced"/>
</dbReference>
<dbReference type="GO" id="GO:0032154">
    <property type="term" value="C:cleavage furrow"/>
    <property type="evidence" value="ECO:0007669"/>
    <property type="project" value="TreeGrafter"/>
</dbReference>
<dbReference type="GO" id="GO:0005737">
    <property type="term" value="C:cytoplasm"/>
    <property type="evidence" value="ECO:0007669"/>
    <property type="project" value="TreeGrafter"/>
</dbReference>
<dbReference type="GO" id="GO:0030027">
    <property type="term" value="C:lamellipodium"/>
    <property type="evidence" value="ECO:0007669"/>
    <property type="project" value="TreeGrafter"/>
</dbReference>
<dbReference type="GO" id="GO:0001725">
    <property type="term" value="C:stress fiber"/>
    <property type="evidence" value="ECO:0007669"/>
    <property type="project" value="TreeGrafter"/>
</dbReference>
<dbReference type="GO" id="GO:0005516">
    <property type="term" value="F:calmodulin binding"/>
    <property type="evidence" value="ECO:0007669"/>
    <property type="project" value="UniProtKB-KW"/>
</dbReference>
<dbReference type="GO" id="GO:0004687">
    <property type="term" value="F:myosin light chain kinase activity"/>
    <property type="evidence" value="ECO:0007669"/>
    <property type="project" value="TreeGrafter"/>
</dbReference>
<dbReference type="GO" id="GO:0014820">
    <property type="term" value="P:tonic smooth muscle contraction"/>
    <property type="evidence" value="ECO:0007669"/>
    <property type="project" value="TreeGrafter"/>
</dbReference>
<dbReference type="CDD" id="cd20973">
    <property type="entry name" value="IgI_telokin-like"/>
    <property type="match status" value="1"/>
</dbReference>
<dbReference type="FunFam" id="2.60.40.10:FF:000080">
    <property type="entry name" value="Myosin light chain kinase, smooth muscle"/>
    <property type="match status" value="1"/>
</dbReference>
<dbReference type="Gene3D" id="2.60.40.10">
    <property type="entry name" value="Immunoglobulins"/>
    <property type="match status" value="1"/>
</dbReference>
<dbReference type="InterPro" id="IPR007110">
    <property type="entry name" value="Ig-like_dom"/>
</dbReference>
<dbReference type="InterPro" id="IPR036179">
    <property type="entry name" value="Ig-like_dom_sf"/>
</dbReference>
<dbReference type="InterPro" id="IPR013783">
    <property type="entry name" value="Ig-like_fold"/>
</dbReference>
<dbReference type="InterPro" id="IPR013098">
    <property type="entry name" value="Ig_I-set"/>
</dbReference>
<dbReference type="InterPro" id="IPR003599">
    <property type="entry name" value="Ig_sub"/>
</dbReference>
<dbReference type="InterPro" id="IPR003598">
    <property type="entry name" value="Ig_sub2"/>
</dbReference>
<dbReference type="PANTHER" id="PTHR47633">
    <property type="entry name" value="IMMUNOGLOBULIN"/>
    <property type="match status" value="1"/>
</dbReference>
<dbReference type="PANTHER" id="PTHR47633:SF1">
    <property type="entry name" value="MYOSIN LIGHT CHAIN KINASE, SMOOTH MUSCLE"/>
    <property type="match status" value="1"/>
</dbReference>
<dbReference type="Pfam" id="PF07679">
    <property type="entry name" value="I-set"/>
    <property type="match status" value="1"/>
</dbReference>
<dbReference type="SMART" id="SM00409">
    <property type="entry name" value="IG"/>
    <property type="match status" value="1"/>
</dbReference>
<dbReference type="SMART" id="SM00408">
    <property type="entry name" value="IGc2"/>
    <property type="match status" value="1"/>
</dbReference>
<dbReference type="SUPFAM" id="SSF48726">
    <property type="entry name" value="Immunoglobulin"/>
    <property type="match status" value="1"/>
</dbReference>
<dbReference type="PROSITE" id="PS50835">
    <property type="entry name" value="IG_LIKE"/>
    <property type="match status" value="1"/>
</dbReference>